<feature type="chain" id="PRO_1000114501" description="Glycine cleavage system H protein">
    <location>
        <begin position="1"/>
        <end position="126"/>
    </location>
</feature>
<feature type="domain" description="Lipoyl-binding" evidence="2">
    <location>
        <begin position="24"/>
        <end position="105"/>
    </location>
</feature>
<feature type="modified residue" description="N6-lipoyllysine" evidence="1">
    <location>
        <position position="65"/>
    </location>
</feature>
<gene>
    <name evidence="1" type="primary">gcvH</name>
    <name type="ordered locus">BceJ2315_00740</name>
    <name type="ORF">BCAL0074</name>
</gene>
<organism>
    <name type="scientific">Burkholderia cenocepacia (strain ATCC BAA-245 / DSM 16553 / LMG 16656 / NCTC 13227 / J2315 / CF5610)</name>
    <name type="common">Burkholderia cepacia (strain J2315)</name>
    <dbReference type="NCBI Taxonomy" id="216591"/>
    <lineage>
        <taxon>Bacteria</taxon>
        <taxon>Pseudomonadati</taxon>
        <taxon>Pseudomonadota</taxon>
        <taxon>Betaproteobacteria</taxon>
        <taxon>Burkholderiales</taxon>
        <taxon>Burkholderiaceae</taxon>
        <taxon>Burkholderia</taxon>
        <taxon>Burkholderia cepacia complex</taxon>
    </lineage>
</organism>
<evidence type="ECO:0000255" key="1">
    <source>
        <dbReference type="HAMAP-Rule" id="MF_00272"/>
    </source>
</evidence>
<evidence type="ECO:0000255" key="2">
    <source>
        <dbReference type="PROSITE-ProRule" id="PRU01066"/>
    </source>
</evidence>
<protein>
    <recommendedName>
        <fullName evidence="1">Glycine cleavage system H protein</fullName>
    </recommendedName>
</protein>
<accession>B4EF27</accession>
<dbReference type="EMBL" id="AM747720">
    <property type="protein sequence ID" value="CAR50380.1"/>
    <property type="molecule type" value="Genomic_DNA"/>
</dbReference>
<dbReference type="RefSeq" id="WP_006485673.1">
    <property type="nucleotide sequence ID" value="NC_011000.1"/>
</dbReference>
<dbReference type="SMR" id="B4EF27"/>
<dbReference type="GeneID" id="56556633"/>
<dbReference type="KEGG" id="bcj:BCAL0074"/>
<dbReference type="eggNOG" id="COG0509">
    <property type="taxonomic scope" value="Bacteria"/>
</dbReference>
<dbReference type="HOGENOM" id="CLU_097408_2_1_4"/>
<dbReference type="BioCyc" id="BCEN216591:G1G1V-87-MONOMER"/>
<dbReference type="Proteomes" id="UP000001035">
    <property type="component" value="Chromosome 1"/>
</dbReference>
<dbReference type="GO" id="GO:0005829">
    <property type="term" value="C:cytosol"/>
    <property type="evidence" value="ECO:0007669"/>
    <property type="project" value="TreeGrafter"/>
</dbReference>
<dbReference type="GO" id="GO:0005960">
    <property type="term" value="C:glycine cleavage complex"/>
    <property type="evidence" value="ECO:0007669"/>
    <property type="project" value="InterPro"/>
</dbReference>
<dbReference type="GO" id="GO:0019464">
    <property type="term" value="P:glycine decarboxylation via glycine cleavage system"/>
    <property type="evidence" value="ECO:0007669"/>
    <property type="project" value="UniProtKB-UniRule"/>
</dbReference>
<dbReference type="CDD" id="cd06848">
    <property type="entry name" value="GCS_H"/>
    <property type="match status" value="1"/>
</dbReference>
<dbReference type="Gene3D" id="2.40.50.100">
    <property type="match status" value="1"/>
</dbReference>
<dbReference type="HAMAP" id="MF_00272">
    <property type="entry name" value="GcvH"/>
    <property type="match status" value="1"/>
</dbReference>
<dbReference type="InterPro" id="IPR003016">
    <property type="entry name" value="2-oxoA_DH_lipoyl-BS"/>
</dbReference>
<dbReference type="InterPro" id="IPR000089">
    <property type="entry name" value="Biotin_lipoyl"/>
</dbReference>
<dbReference type="InterPro" id="IPR002930">
    <property type="entry name" value="GCV_H"/>
</dbReference>
<dbReference type="InterPro" id="IPR033753">
    <property type="entry name" value="GCV_H/Fam206"/>
</dbReference>
<dbReference type="InterPro" id="IPR017453">
    <property type="entry name" value="GCV_H_sub"/>
</dbReference>
<dbReference type="InterPro" id="IPR011053">
    <property type="entry name" value="Single_hybrid_motif"/>
</dbReference>
<dbReference type="NCBIfam" id="TIGR00527">
    <property type="entry name" value="gcvH"/>
    <property type="match status" value="1"/>
</dbReference>
<dbReference type="NCBIfam" id="NF002270">
    <property type="entry name" value="PRK01202.1"/>
    <property type="match status" value="1"/>
</dbReference>
<dbReference type="PANTHER" id="PTHR11715">
    <property type="entry name" value="GLYCINE CLEAVAGE SYSTEM H PROTEIN"/>
    <property type="match status" value="1"/>
</dbReference>
<dbReference type="PANTHER" id="PTHR11715:SF3">
    <property type="entry name" value="GLYCINE CLEAVAGE SYSTEM H PROTEIN-RELATED"/>
    <property type="match status" value="1"/>
</dbReference>
<dbReference type="Pfam" id="PF01597">
    <property type="entry name" value="GCV_H"/>
    <property type="match status" value="1"/>
</dbReference>
<dbReference type="SUPFAM" id="SSF51230">
    <property type="entry name" value="Single hybrid motif"/>
    <property type="match status" value="1"/>
</dbReference>
<dbReference type="PROSITE" id="PS50968">
    <property type="entry name" value="BIOTINYL_LIPOYL"/>
    <property type="match status" value="1"/>
</dbReference>
<dbReference type="PROSITE" id="PS00189">
    <property type="entry name" value="LIPOYL"/>
    <property type="match status" value="1"/>
</dbReference>
<proteinExistence type="inferred from homology"/>
<sequence>MSNVPAELKYTDEHEWIRTEADGTLTVGITDHAQSTLGDIVFLELPEVGKSVNAGDAVGVVESVKAASDIYSPVSGEIVAINEAATDAPEEVNGDAYGVWLFKIKLAAGASTDKLIDADAYSKLID</sequence>
<comment type="function">
    <text evidence="1">The glycine cleavage system catalyzes the degradation of glycine. The H protein shuttles the methylamine group of glycine from the P protein to the T protein.</text>
</comment>
<comment type="cofactor">
    <cofactor evidence="1">
        <name>(R)-lipoate</name>
        <dbReference type="ChEBI" id="CHEBI:83088"/>
    </cofactor>
    <text evidence="1">Binds 1 lipoyl cofactor covalently.</text>
</comment>
<comment type="subunit">
    <text evidence="1">The glycine cleavage system is composed of four proteins: P, T, L and H.</text>
</comment>
<comment type="similarity">
    <text evidence="1">Belongs to the GcvH family.</text>
</comment>
<reference key="1">
    <citation type="journal article" date="2009" name="J. Bacteriol.">
        <title>The genome of Burkholderia cenocepacia J2315, an epidemic pathogen of cystic fibrosis patients.</title>
        <authorList>
            <person name="Holden M.T."/>
            <person name="Seth-Smith H.M."/>
            <person name="Crossman L.C."/>
            <person name="Sebaihia M."/>
            <person name="Bentley S.D."/>
            <person name="Cerdeno-Tarraga A.M."/>
            <person name="Thomson N.R."/>
            <person name="Bason N."/>
            <person name="Quail M.A."/>
            <person name="Sharp S."/>
            <person name="Cherevach I."/>
            <person name="Churcher C."/>
            <person name="Goodhead I."/>
            <person name="Hauser H."/>
            <person name="Holroyd N."/>
            <person name="Mungall K."/>
            <person name="Scott P."/>
            <person name="Walker D."/>
            <person name="White B."/>
            <person name="Rose H."/>
            <person name="Iversen P."/>
            <person name="Mil-Homens D."/>
            <person name="Rocha E.P."/>
            <person name="Fialho A.M."/>
            <person name="Baldwin A."/>
            <person name="Dowson C."/>
            <person name="Barrell B.G."/>
            <person name="Govan J.R."/>
            <person name="Vandamme P."/>
            <person name="Hart C.A."/>
            <person name="Mahenthiralingam E."/>
            <person name="Parkhill J."/>
        </authorList>
    </citation>
    <scope>NUCLEOTIDE SEQUENCE [LARGE SCALE GENOMIC DNA]</scope>
    <source>
        <strain>ATCC BAA-245 / DSM 16553 / LMG 16656 / NCTC 13227 / J2315 / CF5610</strain>
    </source>
</reference>
<keyword id="KW-0450">Lipoyl</keyword>
<name>GCSH_BURCJ</name>